<reference key="1">
    <citation type="journal article" date="2005" name="Science">
        <title>The transcriptional landscape of the mammalian genome.</title>
        <authorList>
            <person name="Carninci P."/>
            <person name="Kasukawa T."/>
            <person name="Katayama S."/>
            <person name="Gough J."/>
            <person name="Frith M.C."/>
            <person name="Maeda N."/>
            <person name="Oyama R."/>
            <person name="Ravasi T."/>
            <person name="Lenhard B."/>
            <person name="Wells C."/>
            <person name="Kodzius R."/>
            <person name="Shimokawa K."/>
            <person name="Bajic V.B."/>
            <person name="Brenner S.E."/>
            <person name="Batalov S."/>
            <person name="Forrest A.R."/>
            <person name="Zavolan M."/>
            <person name="Davis M.J."/>
            <person name="Wilming L.G."/>
            <person name="Aidinis V."/>
            <person name="Allen J.E."/>
            <person name="Ambesi-Impiombato A."/>
            <person name="Apweiler R."/>
            <person name="Aturaliya R.N."/>
            <person name="Bailey T.L."/>
            <person name="Bansal M."/>
            <person name="Baxter L."/>
            <person name="Beisel K.W."/>
            <person name="Bersano T."/>
            <person name="Bono H."/>
            <person name="Chalk A.M."/>
            <person name="Chiu K.P."/>
            <person name="Choudhary V."/>
            <person name="Christoffels A."/>
            <person name="Clutterbuck D.R."/>
            <person name="Crowe M.L."/>
            <person name="Dalla E."/>
            <person name="Dalrymple B.P."/>
            <person name="de Bono B."/>
            <person name="Della Gatta G."/>
            <person name="di Bernardo D."/>
            <person name="Down T."/>
            <person name="Engstrom P."/>
            <person name="Fagiolini M."/>
            <person name="Faulkner G."/>
            <person name="Fletcher C.F."/>
            <person name="Fukushima T."/>
            <person name="Furuno M."/>
            <person name="Futaki S."/>
            <person name="Gariboldi M."/>
            <person name="Georgii-Hemming P."/>
            <person name="Gingeras T.R."/>
            <person name="Gojobori T."/>
            <person name="Green R.E."/>
            <person name="Gustincich S."/>
            <person name="Harbers M."/>
            <person name="Hayashi Y."/>
            <person name="Hensch T.K."/>
            <person name="Hirokawa N."/>
            <person name="Hill D."/>
            <person name="Huminiecki L."/>
            <person name="Iacono M."/>
            <person name="Ikeo K."/>
            <person name="Iwama A."/>
            <person name="Ishikawa T."/>
            <person name="Jakt M."/>
            <person name="Kanapin A."/>
            <person name="Katoh M."/>
            <person name="Kawasawa Y."/>
            <person name="Kelso J."/>
            <person name="Kitamura H."/>
            <person name="Kitano H."/>
            <person name="Kollias G."/>
            <person name="Krishnan S.P."/>
            <person name="Kruger A."/>
            <person name="Kummerfeld S.K."/>
            <person name="Kurochkin I.V."/>
            <person name="Lareau L.F."/>
            <person name="Lazarevic D."/>
            <person name="Lipovich L."/>
            <person name="Liu J."/>
            <person name="Liuni S."/>
            <person name="McWilliam S."/>
            <person name="Madan Babu M."/>
            <person name="Madera M."/>
            <person name="Marchionni L."/>
            <person name="Matsuda H."/>
            <person name="Matsuzawa S."/>
            <person name="Miki H."/>
            <person name="Mignone F."/>
            <person name="Miyake S."/>
            <person name="Morris K."/>
            <person name="Mottagui-Tabar S."/>
            <person name="Mulder N."/>
            <person name="Nakano N."/>
            <person name="Nakauchi H."/>
            <person name="Ng P."/>
            <person name="Nilsson R."/>
            <person name="Nishiguchi S."/>
            <person name="Nishikawa S."/>
            <person name="Nori F."/>
            <person name="Ohara O."/>
            <person name="Okazaki Y."/>
            <person name="Orlando V."/>
            <person name="Pang K.C."/>
            <person name="Pavan W.J."/>
            <person name="Pavesi G."/>
            <person name="Pesole G."/>
            <person name="Petrovsky N."/>
            <person name="Piazza S."/>
            <person name="Reed J."/>
            <person name="Reid J.F."/>
            <person name="Ring B.Z."/>
            <person name="Ringwald M."/>
            <person name="Rost B."/>
            <person name="Ruan Y."/>
            <person name="Salzberg S.L."/>
            <person name="Sandelin A."/>
            <person name="Schneider C."/>
            <person name="Schoenbach C."/>
            <person name="Sekiguchi K."/>
            <person name="Semple C.A."/>
            <person name="Seno S."/>
            <person name="Sessa L."/>
            <person name="Sheng Y."/>
            <person name="Shibata Y."/>
            <person name="Shimada H."/>
            <person name="Shimada K."/>
            <person name="Silva D."/>
            <person name="Sinclair B."/>
            <person name="Sperling S."/>
            <person name="Stupka E."/>
            <person name="Sugiura K."/>
            <person name="Sultana R."/>
            <person name="Takenaka Y."/>
            <person name="Taki K."/>
            <person name="Tammoja K."/>
            <person name="Tan S.L."/>
            <person name="Tang S."/>
            <person name="Taylor M.S."/>
            <person name="Tegner J."/>
            <person name="Teichmann S.A."/>
            <person name="Ueda H.R."/>
            <person name="van Nimwegen E."/>
            <person name="Verardo R."/>
            <person name="Wei C.L."/>
            <person name="Yagi K."/>
            <person name="Yamanishi H."/>
            <person name="Zabarovsky E."/>
            <person name="Zhu S."/>
            <person name="Zimmer A."/>
            <person name="Hide W."/>
            <person name="Bult C."/>
            <person name="Grimmond S.M."/>
            <person name="Teasdale R.D."/>
            <person name="Liu E.T."/>
            <person name="Brusic V."/>
            <person name="Quackenbush J."/>
            <person name="Wahlestedt C."/>
            <person name="Mattick J.S."/>
            <person name="Hume D.A."/>
            <person name="Kai C."/>
            <person name="Sasaki D."/>
            <person name="Tomaru Y."/>
            <person name="Fukuda S."/>
            <person name="Kanamori-Katayama M."/>
            <person name="Suzuki M."/>
            <person name="Aoki J."/>
            <person name="Arakawa T."/>
            <person name="Iida J."/>
            <person name="Imamura K."/>
            <person name="Itoh M."/>
            <person name="Kato T."/>
            <person name="Kawaji H."/>
            <person name="Kawagashira N."/>
            <person name="Kawashima T."/>
            <person name="Kojima M."/>
            <person name="Kondo S."/>
            <person name="Konno H."/>
            <person name="Nakano K."/>
            <person name="Ninomiya N."/>
            <person name="Nishio T."/>
            <person name="Okada M."/>
            <person name="Plessy C."/>
            <person name="Shibata K."/>
            <person name="Shiraki T."/>
            <person name="Suzuki S."/>
            <person name="Tagami M."/>
            <person name="Waki K."/>
            <person name="Watahiki A."/>
            <person name="Okamura-Oho Y."/>
            <person name="Suzuki H."/>
            <person name="Kawai J."/>
            <person name="Hayashizaki Y."/>
        </authorList>
    </citation>
    <scope>NUCLEOTIDE SEQUENCE [LARGE SCALE MRNA]</scope>
    <source>
        <strain>C57BL/6J</strain>
        <tissue>Brain cortex</tissue>
        <tissue>Cerebellum</tissue>
        <tissue>Corpora quadrigemina</tissue>
        <tissue>Testis</tissue>
    </source>
</reference>
<reference key="2">
    <citation type="journal article" date="2004" name="Genome Res.">
        <title>The status, quality, and expansion of the NIH full-length cDNA project: the Mammalian Gene Collection (MGC).</title>
        <authorList>
            <consortium name="The MGC Project Team"/>
        </authorList>
    </citation>
    <scope>NUCLEOTIDE SEQUENCE [LARGE SCALE MRNA]</scope>
    <source>
        <strain>FVB/N</strain>
        <tissue>Kidney</tissue>
    </source>
</reference>
<keyword id="KW-0966">Cell projection</keyword>
<keyword id="KW-0969">Cilium</keyword>
<keyword id="KW-0970">Cilium biogenesis/degradation</keyword>
<keyword id="KW-0597">Phosphoprotein</keyword>
<keyword id="KW-1185">Reference proteome</keyword>
<gene>
    <name evidence="5" type="primary">Ubxn10</name>
    <name evidence="5" type="synonym">Ubxd3</name>
</gene>
<sequence>MAIEAPVNFAPPERSTVVSTAGDSSTWQPSSLRMHVIRPKSAKGRKRPNLHRPQGMGDGSPSALSSSPPPRSSGSPSNQKPGVCATVSTSQGAPDEMPELLLQQAPTRTASSLNRYPVLPSINRRSLEVGAVDTVASKTSSLQLSSVQALYQEDSSQEDSRTQVCALEKKFIIRTKRQSSSRASNIEEPSDEEPRLLLAVRSPSGQRFVRYFRPSDDLQTVLEVAEQKNKATYQHCSIETMEVPRRRFSDLTKSLQECGILHKSVLGISQEEGEAWP</sequence>
<name>UBX10_MOUSE</name>
<proteinExistence type="evidence at transcript level"/>
<protein>
    <recommendedName>
        <fullName evidence="4">UBX domain-containing protein 10</fullName>
    </recommendedName>
    <alternativeName>
        <fullName>UBX domain-containing protein 3</fullName>
    </alternativeName>
</protein>
<feature type="chain" id="PRO_0000211030" description="UBX domain-containing protein 10">
    <location>
        <begin position="1"/>
        <end position="277"/>
    </location>
</feature>
<feature type="domain" description="UBX" evidence="2">
    <location>
        <begin position="191"/>
        <end position="268"/>
    </location>
</feature>
<feature type="region of interest" description="Disordered" evidence="3">
    <location>
        <begin position="1"/>
        <end position="102"/>
    </location>
</feature>
<feature type="compositionally biased region" description="Polar residues" evidence="3">
    <location>
        <begin position="16"/>
        <end position="31"/>
    </location>
</feature>
<feature type="compositionally biased region" description="Basic residues" evidence="3">
    <location>
        <begin position="35"/>
        <end position="50"/>
    </location>
</feature>
<feature type="compositionally biased region" description="Low complexity" evidence="3">
    <location>
        <begin position="60"/>
        <end position="77"/>
    </location>
</feature>
<feature type="modified residue" description="Phosphoserine" evidence="1">
    <location>
        <position position="88"/>
    </location>
</feature>
<feature type="sequence conflict" description="In Ref. 2; AAH27099." evidence="4" ref="2">
    <original>L</original>
    <variation>F</variation>
    <location>
        <position position="32"/>
    </location>
</feature>
<feature type="sequence conflict" description="In Ref. 2; AAH27099." evidence="4" ref="2">
    <original>V</original>
    <variation>M</variation>
    <location>
        <position position="132"/>
    </location>
</feature>
<feature type="sequence conflict" description="In Ref. 1; BAC36931." evidence="4" ref="1">
    <original>KA</original>
    <variation>QT</variation>
    <location>
        <begin position="230"/>
        <end position="231"/>
    </location>
</feature>
<organism>
    <name type="scientific">Mus musculus</name>
    <name type="common">Mouse</name>
    <dbReference type="NCBI Taxonomy" id="10090"/>
    <lineage>
        <taxon>Eukaryota</taxon>
        <taxon>Metazoa</taxon>
        <taxon>Chordata</taxon>
        <taxon>Craniata</taxon>
        <taxon>Vertebrata</taxon>
        <taxon>Euteleostomi</taxon>
        <taxon>Mammalia</taxon>
        <taxon>Eutheria</taxon>
        <taxon>Euarchontoglires</taxon>
        <taxon>Glires</taxon>
        <taxon>Rodentia</taxon>
        <taxon>Myomorpha</taxon>
        <taxon>Muroidea</taxon>
        <taxon>Muridae</taxon>
        <taxon>Murinae</taxon>
        <taxon>Mus</taxon>
        <taxon>Mus</taxon>
    </lineage>
</organism>
<accession>Q8BG34</accession>
<accession>Q3TTR1</accession>
<accession>Q8BP58</accession>
<accession>Q8R0B6</accession>
<comment type="function">
    <text evidence="1">VCP/p97-binding protein required for ciliogenesis. Acts as a tethering factor that facilitates recruitment of VCP/p97 to the intraflagellar transport complex B (IFT-B) in cilia. UBX domain-containing proteins act as tethering factors for VCP/p97 and may specify substrate specificity of VCP/p97.</text>
</comment>
<comment type="subunit">
    <text evidence="1">Interacts with CLUAP1; the interaction is direct and mediates interaction with the intraflagellar transport complex B (IFT-B). Interacts with VCP; the interaction is direct.</text>
</comment>
<comment type="subcellular location">
    <subcellularLocation>
        <location evidence="1">Cell projection</location>
        <location evidence="1">Cilium</location>
    </subcellularLocation>
    <text evidence="1">Recruited to cilia in a VCP-dependent manner.</text>
</comment>
<comment type="similarity">
    <text evidence="4">Belongs to the UBXN10 family.</text>
</comment>
<dbReference type="EMBL" id="AK045964">
    <property type="protein sequence ID" value="BAC32548.1"/>
    <property type="molecule type" value="mRNA"/>
</dbReference>
<dbReference type="EMBL" id="AK046949">
    <property type="protein sequence ID" value="BAC32924.1"/>
    <property type="molecule type" value="mRNA"/>
</dbReference>
<dbReference type="EMBL" id="AK077656">
    <property type="protein sequence ID" value="BAC36931.1"/>
    <property type="molecule type" value="mRNA"/>
</dbReference>
<dbReference type="EMBL" id="AK080662">
    <property type="protein sequence ID" value="BAC37971.1"/>
    <property type="molecule type" value="mRNA"/>
</dbReference>
<dbReference type="EMBL" id="AK133185">
    <property type="protein sequence ID" value="BAE21549.1"/>
    <property type="molecule type" value="mRNA"/>
</dbReference>
<dbReference type="EMBL" id="AK161245">
    <property type="protein sequence ID" value="BAE36264.1"/>
    <property type="molecule type" value="mRNA"/>
</dbReference>
<dbReference type="EMBL" id="BC027099">
    <property type="protein sequence ID" value="AAH27099.1"/>
    <property type="molecule type" value="mRNA"/>
</dbReference>
<dbReference type="CCDS" id="CCDS18830.1"/>
<dbReference type="RefSeq" id="NP_001272857.1">
    <property type="nucleotide sequence ID" value="NM_001285928.1"/>
</dbReference>
<dbReference type="RefSeq" id="NP_001272858.1">
    <property type="nucleotide sequence ID" value="NM_001285929.1"/>
</dbReference>
<dbReference type="RefSeq" id="NP_001272859.1">
    <property type="nucleotide sequence ID" value="NM_001285930.1"/>
</dbReference>
<dbReference type="RefSeq" id="NP_848786.1">
    <property type="nucleotide sequence ID" value="NM_178671.5"/>
</dbReference>
<dbReference type="SMR" id="Q8BG34"/>
<dbReference type="FunCoup" id="Q8BG34">
    <property type="interactions" value="58"/>
</dbReference>
<dbReference type="STRING" id="10090.ENSMUSP00000101436"/>
<dbReference type="iPTMnet" id="Q8BG34"/>
<dbReference type="PhosphoSitePlus" id="Q8BG34"/>
<dbReference type="PaxDb" id="10090-ENSMUSP00000101437"/>
<dbReference type="ProteomicsDB" id="298376"/>
<dbReference type="Antibodypedia" id="29784">
    <property type="antibodies" value="177 antibodies from 21 providers"/>
</dbReference>
<dbReference type="Ensembl" id="ENSMUST00000105809.2">
    <property type="protein sequence ID" value="ENSMUSP00000101435.2"/>
    <property type="gene ID" value="ENSMUSG00000043621.14"/>
</dbReference>
<dbReference type="Ensembl" id="ENSMUST00000105810.8">
    <property type="protein sequence ID" value="ENSMUSP00000101436.2"/>
    <property type="gene ID" value="ENSMUSG00000043621.14"/>
</dbReference>
<dbReference type="Ensembl" id="ENSMUST00000105811.9">
    <property type="protein sequence ID" value="ENSMUSP00000101437.3"/>
    <property type="gene ID" value="ENSMUSG00000043621.14"/>
</dbReference>
<dbReference type="Ensembl" id="ENSMUST00000146415.2">
    <property type="protein sequence ID" value="ENSMUSP00000117219.2"/>
    <property type="gene ID" value="ENSMUSG00000043621.14"/>
</dbReference>
<dbReference type="GeneID" id="212190"/>
<dbReference type="KEGG" id="mmu:212190"/>
<dbReference type="UCSC" id="uc008vlc.3">
    <property type="organism name" value="mouse"/>
</dbReference>
<dbReference type="AGR" id="MGI:2443123"/>
<dbReference type="CTD" id="127733"/>
<dbReference type="MGI" id="MGI:2443123">
    <property type="gene designation" value="Ubxn10"/>
</dbReference>
<dbReference type="VEuPathDB" id="HostDB:ENSMUSG00000043621"/>
<dbReference type="eggNOG" id="ENOG502S4IN">
    <property type="taxonomic scope" value="Eukaryota"/>
</dbReference>
<dbReference type="GeneTree" id="ENSGT00390000012939"/>
<dbReference type="HOGENOM" id="CLU_079919_0_0_1"/>
<dbReference type="InParanoid" id="Q8BG34"/>
<dbReference type="OMA" id="ADSFIWQ"/>
<dbReference type="OrthoDB" id="436606at2759"/>
<dbReference type="PhylomeDB" id="Q8BG34"/>
<dbReference type="TreeFam" id="TF335927"/>
<dbReference type="BioGRID-ORCS" id="212190">
    <property type="hits" value="2 hits in 77 CRISPR screens"/>
</dbReference>
<dbReference type="PRO" id="PR:Q8BG34"/>
<dbReference type="Proteomes" id="UP000000589">
    <property type="component" value="Chromosome 4"/>
</dbReference>
<dbReference type="RNAct" id="Q8BG34">
    <property type="molecule type" value="protein"/>
</dbReference>
<dbReference type="Bgee" id="ENSMUSG00000043621">
    <property type="expression patterns" value="Expressed in spermatid and 128 other cell types or tissues"/>
</dbReference>
<dbReference type="GO" id="GO:0005929">
    <property type="term" value="C:cilium"/>
    <property type="evidence" value="ECO:0000250"/>
    <property type="project" value="UniProtKB"/>
</dbReference>
<dbReference type="GO" id="GO:0030992">
    <property type="term" value="C:intraciliary transport particle B"/>
    <property type="evidence" value="ECO:0007669"/>
    <property type="project" value="Ensembl"/>
</dbReference>
<dbReference type="GO" id="GO:0060271">
    <property type="term" value="P:cilium assembly"/>
    <property type="evidence" value="ECO:0000250"/>
    <property type="project" value="UniProtKB"/>
</dbReference>
<dbReference type="CDD" id="cd17076">
    <property type="entry name" value="UBX_UBXN10"/>
    <property type="match status" value="1"/>
</dbReference>
<dbReference type="FunFam" id="3.10.20.90:FF:000529">
    <property type="entry name" value="UBX domain-containing protein 10"/>
    <property type="match status" value="1"/>
</dbReference>
<dbReference type="Gene3D" id="3.10.20.90">
    <property type="entry name" value="Phosphatidylinositol 3-kinase Catalytic Subunit, Chain A, domain 1"/>
    <property type="match status" value="1"/>
</dbReference>
<dbReference type="InterPro" id="IPR029071">
    <property type="entry name" value="Ubiquitin-like_domsf"/>
</dbReference>
<dbReference type="InterPro" id="IPR001012">
    <property type="entry name" value="UBX_dom"/>
</dbReference>
<dbReference type="Pfam" id="PF00789">
    <property type="entry name" value="UBX"/>
    <property type="match status" value="1"/>
</dbReference>
<dbReference type="SMART" id="SM00166">
    <property type="entry name" value="UBX"/>
    <property type="match status" value="1"/>
</dbReference>
<dbReference type="SUPFAM" id="SSF54236">
    <property type="entry name" value="Ubiquitin-like"/>
    <property type="match status" value="1"/>
</dbReference>
<dbReference type="PROSITE" id="PS50033">
    <property type="entry name" value="UBX"/>
    <property type="match status" value="1"/>
</dbReference>
<evidence type="ECO:0000250" key="1">
    <source>
        <dbReference type="UniProtKB" id="Q96LJ8"/>
    </source>
</evidence>
<evidence type="ECO:0000255" key="2">
    <source>
        <dbReference type="PROSITE-ProRule" id="PRU00215"/>
    </source>
</evidence>
<evidence type="ECO:0000256" key="3">
    <source>
        <dbReference type="SAM" id="MobiDB-lite"/>
    </source>
</evidence>
<evidence type="ECO:0000305" key="4"/>
<evidence type="ECO:0000312" key="5">
    <source>
        <dbReference type="MGI" id="MGI:2443123"/>
    </source>
</evidence>